<comment type="function">
    <text evidence="1">In the hair cortex, hair keratin intermediate filaments are embedded in an interfilamentous matrix, consisting of hair keratin-associated proteins (KRTAP), which are essential for the formation of a rigid and resistant hair shaft through their extensive disulfide bond cross-linking with abundant cysteine residues of hair keratins. The matrix proteins include the high-sulfur and high-glycine-tyrosine keratins (By similarity).</text>
</comment>
<comment type="subunit">
    <text evidence="1">Interacts with hair keratins.</text>
</comment>
<comment type="similarity">
    <text evidence="3">Belongs to the KRTAP type 3 family.</text>
</comment>
<organism>
    <name type="scientific">Mus musculus</name>
    <name type="common">Mouse</name>
    <dbReference type="NCBI Taxonomy" id="10090"/>
    <lineage>
        <taxon>Eukaryota</taxon>
        <taxon>Metazoa</taxon>
        <taxon>Chordata</taxon>
        <taxon>Craniata</taxon>
        <taxon>Vertebrata</taxon>
        <taxon>Euteleostomi</taxon>
        <taxon>Mammalia</taxon>
        <taxon>Eutheria</taxon>
        <taxon>Euarchontoglires</taxon>
        <taxon>Glires</taxon>
        <taxon>Rodentia</taxon>
        <taxon>Myomorpha</taxon>
        <taxon>Muroidea</taxon>
        <taxon>Muridae</taxon>
        <taxon>Murinae</taxon>
        <taxon>Mus</taxon>
        <taxon>Mus</taxon>
    </lineage>
</organism>
<gene>
    <name evidence="12" type="primary">Krtap3-2</name>
    <name evidence="11" type="synonym">Krtap3-3</name>
</gene>
<evidence type="ECO:0000250" key="1"/>
<evidence type="ECO:0000250" key="2">
    <source>
        <dbReference type="UniProtKB" id="P02447"/>
    </source>
</evidence>
<evidence type="ECO:0000250" key="3">
    <source>
        <dbReference type="UniProtKB" id="Q9BYR7"/>
    </source>
</evidence>
<evidence type="ECO:0000255" key="4"/>
<evidence type="ECO:0000305" key="5"/>
<evidence type="ECO:0000312" key="6">
    <source>
        <dbReference type="EMBL" id="AAI17093.1"/>
    </source>
</evidence>
<evidence type="ECO:0000312" key="7">
    <source>
        <dbReference type="EMBL" id="BAB22891.1"/>
    </source>
</evidence>
<evidence type="ECO:0000312" key="8">
    <source>
        <dbReference type="EMBL" id="BAB26727.1"/>
    </source>
</evidence>
<evidence type="ECO:0000312" key="9">
    <source>
        <dbReference type="EMBL" id="BAB29484.1"/>
    </source>
</evidence>
<evidence type="ECO:0000312" key="10">
    <source>
        <dbReference type="EMBL" id="CAM19193.1"/>
    </source>
</evidence>
<evidence type="ECO:0000312" key="11">
    <source>
        <dbReference type="EMBL" id="CAM19194.1"/>
    </source>
</evidence>
<evidence type="ECO:0000312" key="12">
    <source>
        <dbReference type="MGI" id="MGI:1913958"/>
    </source>
</evidence>
<feature type="initiator methionine" description="Removed" evidence="2">
    <location>
        <position position="1"/>
    </location>
</feature>
<feature type="chain" id="PRO_0000358595" description="Keratin-associated protein 3-2">
    <location>
        <begin position="2"/>
        <end position="99"/>
    </location>
</feature>
<feature type="repeat" description="1" evidence="4">
    <location>
        <begin position="3"/>
        <end position="7"/>
    </location>
</feature>
<feature type="repeat" description="2" evidence="4">
    <location>
        <begin position="8"/>
        <end position="12"/>
    </location>
</feature>
<feature type="repeat" description="3" evidence="4">
    <location>
        <begin position="47"/>
        <end position="51"/>
    </location>
</feature>
<feature type="region of interest" description="3 X 5 AA repeats of C-C-X(3)" evidence="4">
    <location>
        <begin position="3"/>
        <end position="59"/>
    </location>
</feature>
<feature type="modified residue" description="N-acetylalanine" evidence="2">
    <location>
        <position position="2"/>
    </location>
</feature>
<feature type="sequence conflict" description="In Ref. 1; BAB29484." evidence="5" ref="1">
    <original>T</original>
    <variation>A</variation>
    <location>
        <position position="13"/>
    </location>
</feature>
<dbReference type="EMBL" id="AK003615">
    <property type="protein sequence ID" value="BAB22891.1"/>
    <property type="molecule type" value="mRNA"/>
</dbReference>
<dbReference type="EMBL" id="AK009410">
    <property type="protein sequence ID" value="BAB26270.1"/>
    <property type="molecule type" value="mRNA"/>
</dbReference>
<dbReference type="EMBL" id="AK010142">
    <property type="protein sequence ID" value="BAB26727.1"/>
    <property type="molecule type" value="mRNA"/>
</dbReference>
<dbReference type="EMBL" id="AK014641">
    <property type="protein sequence ID" value="BAB29484.1"/>
    <property type="molecule type" value="mRNA"/>
</dbReference>
<dbReference type="EMBL" id="AL591417">
    <property type="protein sequence ID" value="CAM19193.1"/>
    <property type="molecule type" value="Genomic_DNA"/>
</dbReference>
<dbReference type="EMBL" id="AL591417">
    <property type="protein sequence ID" value="CAM19194.1"/>
    <property type="molecule type" value="Genomic_DNA"/>
</dbReference>
<dbReference type="EMBL" id="BC117058">
    <property type="protein sequence ID" value="AAI17059.1"/>
    <property type="molecule type" value="mRNA"/>
</dbReference>
<dbReference type="EMBL" id="BC117092">
    <property type="protein sequence ID" value="AAI17093.1"/>
    <property type="molecule type" value="mRNA"/>
</dbReference>
<dbReference type="EMBL" id="BC120760">
    <property type="protein sequence ID" value="AAI20761.1"/>
    <property type="molecule type" value="mRNA"/>
</dbReference>
<dbReference type="EMBL" id="BC120762">
    <property type="protein sequence ID" value="AAI20763.1"/>
    <property type="molecule type" value="mRNA"/>
</dbReference>
<dbReference type="CCDS" id="CCDS25385.1"/>
<dbReference type="CCDS" id="CCDS25386.1"/>
<dbReference type="RefSeq" id="NP_079800.1">
    <property type="nucleotide sequence ID" value="NM_025524.2"/>
</dbReference>
<dbReference type="RefSeq" id="NP_079996.2">
    <property type="nucleotide sequence ID" value="NM_025720.3"/>
</dbReference>
<dbReference type="FunCoup" id="Q9D638">
    <property type="interactions" value="72"/>
</dbReference>
<dbReference type="STRING" id="10090.ENSMUSP00000090373"/>
<dbReference type="PhosphoSitePlus" id="Q9D638"/>
<dbReference type="PaxDb" id="10090-ENSMUSP00000090373"/>
<dbReference type="DNASU" id="66708"/>
<dbReference type="Ensembl" id="ENSMUST00000092699.3">
    <property type="protein sequence ID" value="ENSMUSP00000090373.3"/>
    <property type="gene ID" value="ENSMUSG00000069721.3"/>
</dbReference>
<dbReference type="Ensembl" id="ENSMUST00000092700.5">
    <property type="protein sequence ID" value="ENSMUSP00000090374.4"/>
    <property type="gene ID" value="ENSMUSG00000069722.5"/>
</dbReference>
<dbReference type="GeneID" id="66380"/>
<dbReference type="GeneID" id="66708"/>
<dbReference type="KEGG" id="mmu:66380"/>
<dbReference type="KEGG" id="mmu:66708"/>
<dbReference type="UCSC" id="uc007liz.1">
    <property type="organism name" value="mouse"/>
</dbReference>
<dbReference type="AGR" id="MGI:1913958"/>
<dbReference type="CTD" id="83897"/>
<dbReference type="CTD" id="85293"/>
<dbReference type="MGI" id="MGI:1913958">
    <property type="gene designation" value="Krtap3-2"/>
</dbReference>
<dbReference type="VEuPathDB" id="HostDB:ENSMUSG00000069721"/>
<dbReference type="VEuPathDB" id="HostDB:ENSMUSG00000069722"/>
<dbReference type="eggNOG" id="KOG4726">
    <property type="taxonomic scope" value="Eukaryota"/>
</dbReference>
<dbReference type="GeneTree" id="ENSGT00390000001157"/>
<dbReference type="HOGENOM" id="CLU_2359185_0_0_1"/>
<dbReference type="InParanoid" id="Q9D638"/>
<dbReference type="OMA" id="PCIPRNC"/>
<dbReference type="OrthoDB" id="48186at9989"/>
<dbReference type="PhylomeDB" id="Q9D638"/>
<dbReference type="TreeFam" id="TF338042"/>
<dbReference type="Reactome" id="R-MMU-6805567">
    <property type="pathway name" value="Keratinization"/>
</dbReference>
<dbReference type="BioGRID-ORCS" id="66380">
    <property type="hits" value="1 hit in 37 CRISPR screens"/>
</dbReference>
<dbReference type="BioGRID-ORCS" id="66708">
    <property type="hits" value="1 hit in 38 CRISPR screens"/>
</dbReference>
<dbReference type="PRO" id="PR:Q9D638"/>
<dbReference type="Proteomes" id="UP000000589">
    <property type="component" value="Chromosome 11"/>
</dbReference>
<dbReference type="RNAct" id="Q9D638">
    <property type="molecule type" value="protein"/>
</dbReference>
<dbReference type="Bgee" id="ENSMUSG00000069721">
    <property type="expression patterns" value="Expressed in lip and 6 other cell types or tissues"/>
</dbReference>
<dbReference type="GO" id="GO:0005829">
    <property type="term" value="C:cytosol"/>
    <property type="evidence" value="ECO:0007669"/>
    <property type="project" value="UniProtKB-ARBA"/>
</dbReference>
<dbReference type="GO" id="GO:0045095">
    <property type="term" value="C:keratin filament"/>
    <property type="evidence" value="ECO:0007669"/>
    <property type="project" value="InterPro"/>
</dbReference>
<dbReference type="GO" id="GO:0005198">
    <property type="term" value="F:structural molecule activity"/>
    <property type="evidence" value="ECO:0007669"/>
    <property type="project" value="InterPro"/>
</dbReference>
<dbReference type="InterPro" id="IPR007659">
    <property type="entry name" value="Keratin_matx"/>
</dbReference>
<dbReference type="PANTHER" id="PTHR23260">
    <property type="entry name" value="KERATIN ASSOCIATED PROTEIN 3-3-RELATED"/>
    <property type="match status" value="1"/>
</dbReference>
<dbReference type="PANTHER" id="PTHR23260:SF1">
    <property type="entry name" value="KERATIN-ASSOCIATED PROTEIN 3-3"/>
    <property type="match status" value="1"/>
</dbReference>
<dbReference type="Pfam" id="PF04579">
    <property type="entry name" value="Keratin_matx"/>
    <property type="match status" value="1"/>
</dbReference>
<proteinExistence type="inferred from homology"/>
<protein>
    <recommendedName>
        <fullName evidence="10">Keratin-associated protein 3-2</fullName>
    </recommendedName>
    <alternativeName>
        <fullName>Keratin-associated protein 3-3</fullName>
    </alternativeName>
</protein>
<keyword id="KW-0007">Acetylation</keyword>
<keyword id="KW-0416">Keratin</keyword>
<keyword id="KW-1185">Reference proteome</keyword>
<keyword id="KW-0677">Repeat</keyword>
<name>KRA32_MOUSE</name>
<sequence length="99" mass="10574">MACCVARCCSVPTGPATTICSSDKSCRCGVCLPSTCPHTIWQLEPTCCDNCPPPCHIPQPCVPTCFLLNSCHPTPDLLTVNLTTYVQPGCEEPCVPRCC</sequence>
<accession>Q9D638</accession>
<accession>Q9CPW1</accession>
<reference evidence="9" key="1">
    <citation type="journal article" date="2005" name="Science">
        <title>The transcriptional landscape of the mammalian genome.</title>
        <authorList>
            <person name="Carninci P."/>
            <person name="Kasukawa T."/>
            <person name="Katayama S."/>
            <person name="Gough J."/>
            <person name="Frith M.C."/>
            <person name="Maeda N."/>
            <person name="Oyama R."/>
            <person name="Ravasi T."/>
            <person name="Lenhard B."/>
            <person name="Wells C."/>
            <person name="Kodzius R."/>
            <person name="Shimokawa K."/>
            <person name="Bajic V.B."/>
            <person name="Brenner S.E."/>
            <person name="Batalov S."/>
            <person name="Forrest A.R."/>
            <person name="Zavolan M."/>
            <person name="Davis M.J."/>
            <person name="Wilming L.G."/>
            <person name="Aidinis V."/>
            <person name="Allen J.E."/>
            <person name="Ambesi-Impiombato A."/>
            <person name="Apweiler R."/>
            <person name="Aturaliya R.N."/>
            <person name="Bailey T.L."/>
            <person name="Bansal M."/>
            <person name="Baxter L."/>
            <person name="Beisel K.W."/>
            <person name="Bersano T."/>
            <person name="Bono H."/>
            <person name="Chalk A.M."/>
            <person name="Chiu K.P."/>
            <person name="Choudhary V."/>
            <person name="Christoffels A."/>
            <person name="Clutterbuck D.R."/>
            <person name="Crowe M.L."/>
            <person name="Dalla E."/>
            <person name="Dalrymple B.P."/>
            <person name="de Bono B."/>
            <person name="Della Gatta G."/>
            <person name="di Bernardo D."/>
            <person name="Down T."/>
            <person name="Engstrom P."/>
            <person name="Fagiolini M."/>
            <person name="Faulkner G."/>
            <person name="Fletcher C.F."/>
            <person name="Fukushima T."/>
            <person name="Furuno M."/>
            <person name="Futaki S."/>
            <person name="Gariboldi M."/>
            <person name="Georgii-Hemming P."/>
            <person name="Gingeras T.R."/>
            <person name="Gojobori T."/>
            <person name="Green R.E."/>
            <person name="Gustincich S."/>
            <person name="Harbers M."/>
            <person name="Hayashi Y."/>
            <person name="Hensch T.K."/>
            <person name="Hirokawa N."/>
            <person name="Hill D."/>
            <person name="Huminiecki L."/>
            <person name="Iacono M."/>
            <person name="Ikeo K."/>
            <person name="Iwama A."/>
            <person name="Ishikawa T."/>
            <person name="Jakt M."/>
            <person name="Kanapin A."/>
            <person name="Katoh M."/>
            <person name="Kawasawa Y."/>
            <person name="Kelso J."/>
            <person name="Kitamura H."/>
            <person name="Kitano H."/>
            <person name="Kollias G."/>
            <person name="Krishnan S.P."/>
            <person name="Kruger A."/>
            <person name="Kummerfeld S.K."/>
            <person name="Kurochkin I.V."/>
            <person name="Lareau L.F."/>
            <person name="Lazarevic D."/>
            <person name="Lipovich L."/>
            <person name="Liu J."/>
            <person name="Liuni S."/>
            <person name="McWilliam S."/>
            <person name="Madan Babu M."/>
            <person name="Madera M."/>
            <person name="Marchionni L."/>
            <person name="Matsuda H."/>
            <person name="Matsuzawa S."/>
            <person name="Miki H."/>
            <person name="Mignone F."/>
            <person name="Miyake S."/>
            <person name="Morris K."/>
            <person name="Mottagui-Tabar S."/>
            <person name="Mulder N."/>
            <person name="Nakano N."/>
            <person name="Nakauchi H."/>
            <person name="Ng P."/>
            <person name="Nilsson R."/>
            <person name="Nishiguchi S."/>
            <person name="Nishikawa S."/>
            <person name="Nori F."/>
            <person name="Ohara O."/>
            <person name="Okazaki Y."/>
            <person name="Orlando V."/>
            <person name="Pang K.C."/>
            <person name="Pavan W.J."/>
            <person name="Pavesi G."/>
            <person name="Pesole G."/>
            <person name="Petrovsky N."/>
            <person name="Piazza S."/>
            <person name="Reed J."/>
            <person name="Reid J.F."/>
            <person name="Ring B.Z."/>
            <person name="Ringwald M."/>
            <person name="Rost B."/>
            <person name="Ruan Y."/>
            <person name="Salzberg S.L."/>
            <person name="Sandelin A."/>
            <person name="Schneider C."/>
            <person name="Schoenbach C."/>
            <person name="Sekiguchi K."/>
            <person name="Semple C.A."/>
            <person name="Seno S."/>
            <person name="Sessa L."/>
            <person name="Sheng Y."/>
            <person name="Shibata Y."/>
            <person name="Shimada H."/>
            <person name="Shimada K."/>
            <person name="Silva D."/>
            <person name="Sinclair B."/>
            <person name="Sperling S."/>
            <person name="Stupka E."/>
            <person name="Sugiura K."/>
            <person name="Sultana R."/>
            <person name="Takenaka Y."/>
            <person name="Taki K."/>
            <person name="Tammoja K."/>
            <person name="Tan S.L."/>
            <person name="Tang S."/>
            <person name="Taylor M.S."/>
            <person name="Tegner J."/>
            <person name="Teichmann S.A."/>
            <person name="Ueda H.R."/>
            <person name="van Nimwegen E."/>
            <person name="Verardo R."/>
            <person name="Wei C.L."/>
            <person name="Yagi K."/>
            <person name="Yamanishi H."/>
            <person name="Zabarovsky E."/>
            <person name="Zhu S."/>
            <person name="Zimmer A."/>
            <person name="Hide W."/>
            <person name="Bult C."/>
            <person name="Grimmond S.M."/>
            <person name="Teasdale R.D."/>
            <person name="Liu E.T."/>
            <person name="Brusic V."/>
            <person name="Quackenbush J."/>
            <person name="Wahlestedt C."/>
            <person name="Mattick J.S."/>
            <person name="Hume D.A."/>
            <person name="Kai C."/>
            <person name="Sasaki D."/>
            <person name="Tomaru Y."/>
            <person name="Fukuda S."/>
            <person name="Kanamori-Katayama M."/>
            <person name="Suzuki M."/>
            <person name="Aoki J."/>
            <person name="Arakawa T."/>
            <person name="Iida J."/>
            <person name="Imamura K."/>
            <person name="Itoh M."/>
            <person name="Kato T."/>
            <person name="Kawaji H."/>
            <person name="Kawagashira N."/>
            <person name="Kawashima T."/>
            <person name="Kojima M."/>
            <person name="Kondo S."/>
            <person name="Konno H."/>
            <person name="Nakano K."/>
            <person name="Ninomiya N."/>
            <person name="Nishio T."/>
            <person name="Okada M."/>
            <person name="Plessy C."/>
            <person name="Shibata K."/>
            <person name="Shiraki T."/>
            <person name="Suzuki S."/>
            <person name="Tagami M."/>
            <person name="Waki K."/>
            <person name="Watahiki A."/>
            <person name="Okamura-Oho Y."/>
            <person name="Suzuki H."/>
            <person name="Kawai J."/>
            <person name="Hayashizaki Y."/>
        </authorList>
    </citation>
    <scope>NUCLEOTIDE SEQUENCE [LARGE SCALE MRNA]</scope>
    <source>
        <strain evidence="9">C57BL/6J</strain>
        <tissue evidence="7">Embryo</tissue>
        <tissue evidence="9">Neonatal skin</tissue>
        <tissue evidence="8">Tongue</tissue>
    </source>
</reference>
<reference key="2">
    <citation type="journal article" date="2009" name="PLoS Biol.">
        <title>Lineage-specific biology revealed by a finished genome assembly of the mouse.</title>
        <authorList>
            <person name="Church D.M."/>
            <person name="Goodstadt L."/>
            <person name="Hillier L.W."/>
            <person name="Zody M.C."/>
            <person name="Goldstein S."/>
            <person name="She X."/>
            <person name="Bult C.J."/>
            <person name="Agarwala R."/>
            <person name="Cherry J.L."/>
            <person name="DiCuccio M."/>
            <person name="Hlavina W."/>
            <person name="Kapustin Y."/>
            <person name="Meric P."/>
            <person name="Maglott D."/>
            <person name="Birtle Z."/>
            <person name="Marques A.C."/>
            <person name="Graves T."/>
            <person name="Zhou S."/>
            <person name="Teague B."/>
            <person name="Potamousis K."/>
            <person name="Churas C."/>
            <person name="Place M."/>
            <person name="Herschleb J."/>
            <person name="Runnheim R."/>
            <person name="Forrest D."/>
            <person name="Amos-Landgraf J."/>
            <person name="Schwartz D.C."/>
            <person name="Cheng Z."/>
            <person name="Lindblad-Toh K."/>
            <person name="Eichler E.E."/>
            <person name="Ponting C.P."/>
        </authorList>
    </citation>
    <scope>NUCLEOTIDE SEQUENCE [LARGE SCALE GENOMIC DNA]</scope>
    <source>
        <strain>C57BL/6J</strain>
    </source>
</reference>
<reference evidence="6" key="3">
    <citation type="journal article" date="2004" name="Genome Res.">
        <title>The status, quality, and expansion of the NIH full-length cDNA project: the Mammalian Gene Collection (MGC).</title>
        <authorList>
            <consortium name="The MGC Project Team"/>
        </authorList>
    </citation>
    <scope>NUCLEOTIDE SEQUENCE [LARGE SCALE MRNA]</scope>
</reference>